<name>DPO4_BACFR</name>
<organism>
    <name type="scientific">Bacteroides fragilis (strain YCH46)</name>
    <dbReference type="NCBI Taxonomy" id="295405"/>
    <lineage>
        <taxon>Bacteria</taxon>
        <taxon>Pseudomonadati</taxon>
        <taxon>Bacteroidota</taxon>
        <taxon>Bacteroidia</taxon>
        <taxon>Bacteroidales</taxon>
        <taxon>Bacteroidaceae</taxon>
        <taxon>Bacteroides</taxon>
    </lineage>
</organism>
<comment type="function">
    <text evidence="1">Poorly processive, error-prone DNA polymerase involved in untargeted mutagenesis. Copies undamaged DNA at stalled replication forks, which arise in vivo from mismatched or misaligned primer ends. These misaligned primers can be extended by PolIV. Exhibits no 3'-5' exonuclease (proofreading) activity. May be involved in translesional synthesis, in conjunction with the beta clamp from PolIII.</text>
</comment>
<comment type="catalytic activity">
    <reaction evidence="1">
        <text>DNA(n) + a 2'-deoxyribonucleoside 5'-triphosphate = DNA(n+1) + diphosphate</text>
        <dbReference type="Rhea" id="RHEA:22508"/>
        <dbReference type="Rhea" id="RHEA-COMP:17339"/>
        <dbReference type="Rhea" id="RHEA-COMP:17340"/>
        <dbReference type="ChEBI" id="CHEBI:33019"/>
        <dbReference type="ChEBI" id="CHEBI:61560"/>
        <dbReference type="ChEBI" id="CHEBI:173112"/>
        <dbReference type="EC" id="2.7.7.7"/>
    </reaction>
</comment>
<comment type="cofactor">
    <cofactor evidence="1">
        <name>Mg(2+)</name>
        <dbReference type="ChEBI" id="CHEBI:18420"/>
    </cofactor>
    <text evidence="1">Binds 2 magnesium ions per subunit.</text>
</comment>
<comment type="subunit">
    <text evidence="1">Monomer.</text>
</comment>
<comment type="subcellular location">
    <subcellularLocation>
        <location evidence="1">Cytoplasm</location>
    </subcellularLocation>
</comment>
<comment type="similarity">
    <text evidence="1">Belongs to the DNA polymerase type-Y family.</text>
</comment>
<reference key="1">
    <citation type="journal article" date="2004" name="Proc. Natl. Acad. Sci. U.S.A.">
        <title>Genomic analysis of Bacteroides fragilis reveals extensive DNA inversions regulating cell surface adaptation.</title>
        <authorList>
            <person name="Kuwahara T."/>
            <person name="Yamashita A."/>
            <person name="Hirakawa H."/>
            <person name="Nakayama H."/>
            <person name="Toh H."/>
            <person name="Okada N."/>
            <person name="Kuhara S."/>
            <person name="Hattori M."/>
            <person name="Hayashi T."/>
            <person name="Ohnishi Y."/>
        </authorList>
    </citation>
    <scope>NUCLEOTIDE SEQUENCE [LARGE SCALE GENOMIC DNA]</scope>
    <source>
        <strain>YCH46</strain>
    </source>
</reference>
<feature type="chain" id="PRO_1000163998" description="DNA polymerase IV">
    <location>
        <begin position="1"/>
        <end position="364"/>
    </location>
</feature>
<feature type="domain" description="UmuC" evidence="1">
    <location>
        <begin position="6"/>
        <end position="186"/>
    </location>
</feature>
<feature type="active site" evidence="1">
    <location>
        <position position="105"/>
    </location>
</feature>
<feature type="binding site" evidence="1">
    <location>
        <position position="10"/>
    </location>
    <ligand>
        <name>Mg(2+)</name>
        <dbReference type="ChEBI" id="CHEBI:18420"/>
    </ligand>
</feature>
<feature type="binding site" evidence="1">
    <location>
        <position position="104"/>
    </location>
    <ligand>
        <name>Mg(2+)</name>
        <dbReference type="ChEBI" id="CHEBI:18420"/>
    </ligand>
</feature>
<feature type="site" description="Substrate discrimination" evidence="1">
    <location>
        <position position="15"/>
    </location>
</feature>
<proteinExistence type="inferred from homology"/>
<protein>
    <recommendedName>
        <fullName evidence="1">DNA polymerase IV</fullName>
        <shortName evidence="1">Pol IV</shortName>
        <ecNumber evidence="1">2.7.7.7</ecNumber>
    </recommendedName>
</protein>
<accession>Q64X95</accession>
<gene>
    <name evidence="1" type="primary">dinB</name>
    <name type="ordered locus">BF1131</name>
</gene>
<keyword id="KW-0963">Cytoplasm</keyword>
<keyword id="KW-0227">DNA damage</keyword>
<keyword id="KW-0234">DNA repair</keyword>
<keyword id="KW-0235">DNA replication</keyword>
<keyword id="KW-0238">DNA-binding</keyword>
<keyword id="KW-0239">DNA-directed DNA polymerase</keyword>
<keyword id="KW-0460">Magnesium</keyword>
<keyword id="KW-0479">Metal-binding</keyword>
<keyword id="KW-0515">Mutator protein</keyword>
<keyword id="KW-0548">Nucleotidyltransferase</keyword>
<keyword id="KW-0808">Transferase</keyword>
<dbReference type="EC" id="2.7.7.7" evidence="1"/>
<dbReference type="EMBL" id="AP006841">
    <property type="protein sequence ID" value="BAD47881.1"/>
    <property type="molecule type" value="Genomic_DNA"/>
</dbReference>
<dbReference type="RefSeq" id="WP_008768057.1">
    <property type="nucleotide sequence ID" value="NC_006347.1"/>
</dbReference>
<dbReference type="RefSeq" id="YP_098415.1">
    <property type="nucleotide sequence ID" value="NC_006347.1"/>
</dbReference>
<dbReference type="SMR" id="Q64X95"/>
<dbReference type="STRING" id="295405.BF1131"/>
<dbReference type="GeneID" id="60367639"/>
<dbReference type="KEGG" id="bfr:BF1131"/>
<dbReference type="PATRIC" id="fig|295405.11.peg.1118"/>
<dbReference type="HOGENOM" id="CLU_012348_1_2_10"/>
<dbReference type="OrthoDB" id="9808813at2"/>
<dbReference type="Proteomes" id="UP000002197">
    <property type="component" value="Chromosome"/>
</dbReference>
<dbReference type="GO" id="GO:0005829">
    <property type="term" value="C:cytosol"/>
    <property type="evidence" value="ECO:0007669"/>
    <property type="project" value="TreeGrafter"/>
</dbReference>
<dbReference type="GO" id="GO:0003684">
    <property type="term" value="F:damaged DNA binding"/>
    <property type="evidence" value="ECO:0007669"/>
    <property type="project" value="InterPro"/>
</dbReference>
<dbReference type="GO" id="GO:0003887">
    <property type="term" value="F:DNA-directed DNA polymerase activity"/>
    <property type="evidence" value="ECO:0007669"/>
    <property type="project" value="UniProtKB-UniRule"/>
</dbReference>
<dbReference type="GO" id="GO:0000287">
    <property type="term" value="F:magnesium ion binding"/>
    <property type="evidence" value="ECO:0007669"/>
    <property type="project" value="UniProtKB-UniRule"/>
</dbReference>
<dbReference type="GO" id="GO:0006261">
    <property type="term" value="P:DNA-templated DNA replication"/>
    <property type="evidence" value="ECO:0007669"/>
    <property type="project" value="UniProtKB-UniRule"/>
</dbReference>
<dbReference type="GO" id="GO:0042276">
    <property type="term" value="P:error-prone translesion synthesis"/>
    <property type="evidence" value="ECO:0007669"/>
    <property type="project" value="TreeGrafter"/>
</dbReference>
<dbReference type="GO" id="GO:0009432">
    <property type="term" value="P:SOS response"/>
    <property type="evidence" value="ECO:0007669"/>
    <property type="project" value="TreeGrafter"/>
</dbReference>
<dbReference type="CDD" id="cd03586">
    <property type="entry name" value="PolY_Pol_IV_kappa"/>
    <property type="match status" value="1"/>
</dbReference>
<dbReference type="FunFam" id="1.10.150.20:FF:000019">
    <property type="entry name" value="DNA polymerase IV"/>
    <property type="match status" value="1"/>
</dbReference>
<dbReference type="FunFam" id="3.30.1490.100:FF:000004">
    <property type="entry name" value="DNA polymerase IV"/>
    <property type="match status" value="1"/>
</dbReference>
<dbReference type="FunFam" id="3.40.1170.60:FF:000001">
    <property type="entry name" value="DNA polymerase IV"/>
    <property type="match status" value="1"/>
</dbReference>
<dbReference type="Gene3D" id="3.30.70.270">
    <property type="match status" value="1"/>
</dbReference>
<dbReference type="Gene3D" id="3.40.1170.60">
    <property type="match status" value="1"/>
</dbReference>
<dbReference type="Gene3D" id="1.10.150.20">
    <property type="entry name" value="5' to 3' exonuclease, C-terminal subdomain"/>
    <property type="match status" value="1"/>
</dbReference>
<dbReference type="Gene3D" id="3.30.1490.100">
    <property type="entry name" value="DNA polymerase, Y-family, little finger domain"/>
    <property type="match status" value="1"/>
</dbReference>
<dbReference type="HAMAP" id="MF_01113">
    <property type="entry name" value="DNApol_IV"/>
    <property type="match status" value="1"/>
</dbReference>
<dbReference type="InterPro" id="IPR043502">
    <property type="entry name" value="DNA/RNA_pol_sf"/>
</dbReference>
<dbReference type="InterPro" id="IPR036775">
    <property type="entry name" value="DNA_pol_Y-fam_lit_finger_sf"/>
</dbReference>
<dbReference type="InterPro" id="IPR017961">
    <property type="entry name" value="DNA_pol_Y-fam_little_finger"/>
</dbReference>
<dbReference type="InterPro" id="IPR050116">
    <property type="entry name" value="DNA_polymerase-Y"/>
</dbReference>
<dbReference type="InterPro" id="IPR022880">
    <property type="entry name" value="DNApol_IV"/>
</dbReference>
<dbReference type="InterPro" id="IPR024728">
    <property type="entry name" value="PolY_HhH_motif"/>
</dbReference>
<dbReference type="InterPro" id="IPR043128">
    <property type="entry name" value="Rev_trsase/Diguanyl_cyclase"/>
</dbReference>
<dbReference type="InterPro" id="IPR001126">
    <property type="entry name" value="UmuC"/>
</dbReference>
<dbReference type="NCBIfam" id="NF002677">
    <property type="entry name" value="PRK02406.1"/>
    <property type="match status" value="1"/>
</dbReference>
<dbReference type="PANTHER" id="PTHR11076:SF33">
    <property type="entry name" value="DNA POLYMERASE KAPPA"/>
    <property type="match status" value="1"/>
</dbReference>
<dbReference type="PANTHER" id="PTHR11076">
    <property type="entry name" value="DNA REPAIR POLYMERASE UMUC / TRANSFERASE FAMILY MEMBER"/>
    <property type="match status" value="1"/>
</dbReference>
<dbReference type="Pfam" id="PF00817">
    <property type="entry name" value="IMS"/>
    <property type="match status" value="1"/>
</dbReference>
<dbReference type="Pfam" id="PF11799">
    <property type="entry name" value="IMS_C"/>
    <property type="match status" value="1"/>
</dbReference>
<dbReference type="Pfam" id="PF11798">
    <property type="entry name" value="IMS_HHH"/>
    <property type="match status" value="1"/>
</dbReference>
<dbReference type="SUPFAM" id="SSF56672">
    <property type="entry name" value="DNA/RNA polymerases"/>
    <property type="match status" value="1"/>
</dbReference>
<dbReference type="SUPFAM" id="SSF100879">
    <property type="entry name" value="Lesion bypass DNA polymerase (Y-family), little finger domain"/>
    <property type="match status" value="1"/>
</dbReference>
<dbReference type="PROSITE" id="PS50173">
    <property type="entry name" value="UMUC"/>
    <property type="match status" value="1"/>
</dbReference>
<evidence type="ECO:0000255" key="1">
    <source>
        <dbReference type="HAMAP-Rule" id="MF_01113"/>
    </source>
</evidence>
<sequence>MNERKIIHIDMDAFYASVEQRDHPELRGKPLAVGHAEERGVVAAASYEARRYGVRSAMSSQKAKRLCPQLIFVPGRMEVYKSVSRQVHEIFHEYTDLIEPLSLDEAFLDVTENKQGILLAVDIAKAIKQRIREELSLVASAGVSYNKFLAKIASDFRKPDGLCTIHPDQAIDFIARLPIESFWGVGPVTARKMHLLGIHNGLQLRECSSEMLVRQFGKVGLLYYDFARGVDLRPVEAVRIRKSIGCEHTLEKDIHVRSSVIIELYHVATELVERLQQKEFRGNTLTLKIKFHDFSQITRSMTQAQELTNLERILPLAKQLLKEVEYEQHPIRLIGLSVSNPREEADEHRGVWEQLSFEFSDWGK</sequence>